<reference key="1">
    <citation type="journal article" date="2005" name="J. Bacteriol.">
        <title>Insights on evolution of virulence and resistance from the complete genome analysis of an early methicillin-resistant Staphylococcus aureus strain and a biofilm-producing methicillin-resistant Staphylococcus epidermidis strain.</title>
        <authorList>
            <person name="Gill S.R."/>
            <person name="Fouts D.E."/>
            <person name="Archer G.L."/>
            <person name="Mongodin E.F."/>
            <person name="DeBoy R.T."/>
            <person name="Ravel J."/>
            <person name="Paulsen I.T."/>
            <person name="Kolonay J.F."/>
            <person name="Brinkac L.M."/>
            <person name="Beanan M.J."/>
            <person name="Dodson R.J."/>
            <person name="Daugherty S.C."/>
            <person name="Madupu R."/>
            <person name="Angiuoli S.V."/>
            <person name="Durkin A.S."/>
            <person name="Haft D.H."/>
            <person name="Vamathevan J.J."/>
            <person name="Khouri H."/>
            <person name="Utterback T.R."/>
            <person name="Lee C."/>
            <person name="Dimitrov G."/>
            <person name="Jiang L."/>
            <person name="Qin H."/>
            <person name="Weidman J."/>
            <person name="Tran K."/>
            <person name="Kang K.H."/>
            <person name="Hance I.R."/>
            <person name="Nelson K.E."/>
            <person name="Fraser C.M."/>
        </authorList>
    </citation>
    <scope>NUCLEOTIDE SEQUENCE [LARGE SCALE GENOMIC DNA]</scope>
    <source>
        <strain>ATCC 35984 / DSM 28319 / BCRC 17069 / CCUG 31568 / BM 3577 / RP62A</strain>
    </source>
</reference>
<proteinExistence type="inferred from homology"/>
<protein>
    <recommendedName>
        <fullName evidence="1">Large ribosomal subunit protein bL34</fullName>
    </recommendedName>
    <alternativeName>
        <fullName evidence="3">50S ribosomal protein L34</fullName>
    </alternativeName>
</protein>
<keyword id="KW-1185">Reference proteome</keyword>
<keyword id="KW-0687">Ribonucleoprotein</keyword>
<keyword id="KW-0689">Ribosomal protein</keyword>
<organism>
    <name type="scientific">Staphylococcus epidermidis (strain ATCC 35984 / DSM 28319 / BCRC 17069 / CCUG 31568 / BM 3577 / RP62A)</name>
    <dbReference type="NCBI Taxonomy" id="176279"/>
    <lineage>
        <taxon>Bacteria</taxon>
        <taxon>Bacillati</taxon>
        <taxon>Bacillota</taxon>
        <taxon>Bacilli</taxon>
        <taxon>Bacillales</taxon>
        <taxon>Staphylococcaceae</taxon>
        <taxon>Staphylococcus</taxon>
    </lineage>
</organism>
<accession>Q5HS38</accession>
<dbReference type="EMBL" id="CP000029">
    <property type="protein sequence ID" value="AAW53386.1"/>
    <property type="molecule type" value="Genomic_DNA"/>
</dbReference>
<dbReference type="RefSeq" id="WP_000240855.1">
    <property type="nucleotide sequence ID" value="NC_002976.3"/>
</dbReference>
<dbReference type="SMR" id="Q5HS38"/>
<dbReference type="STRING" id="176279.SERP0001"/>
<dbReference type="GeneID" id="98347025"/>
<dbReference type="KEGG" id="ser:SERP0001"/>
<dbReference type="eggNOG" id="COG0230">
    <property type="taxonomic scope" value="Bacteria"/>
</dbReference>
<dbReference type="HOGENOM" id="CLU_129938_2_0_9"/>
<dbReference type="Proteomes" id="UP000000531">
    <property type="component" value="Chromosome"/>
</dbReference>
<dbReference type="GO" id="GO:1990904">
    <property type="term" value="C:ribonucleoprotein complex"/>
    <property type="evidence" value="ECO:0007669"/>
    <property type="project" value="UniProtKB-KW"/>
</dbReference>
<dbReference type="GO" id="GO:0005840">
    <property type="term" value="C:ribosome"/>
    <property type="evidence" value="ECO:0007669"/>
    <property type="project" value="UniProtKB-KW"/>
</dbReference>
<dbReference type="GO" id="GO:0003735">
    <property type="term" value="F:structural constituent of ribosome"/>
    <property type="evidence" value="ECO:0007669"/>
    <property type="project" value="InterPro"/>
</dbReference>
<dbReference type="GO" id="GO:0006412">
    <property type="term" value="P:translation"/>
    <property type="evidence" value="ECO:0007669"/>
    <property type="project" value="UniProtKB-UniRule"/>
</dbReference>
<dbReference type="FunFam" id="1.10.287.3980:FF:000001">
    <property type="entry name" value="Mitochondrial ribosomal protein L34"/>
    <property type="match status" value="1"/>
</dbReference>
<dbReference type="Gene3D" id="1.10.287.3980">
    <property type="match status" value="1"/>
</dbReference>
<dbReference type="HAMAP" id="MF_00391">
    <property type="entry name" value="Ribosomal_bL34"/>
    <property type="match status" value="1"/>
</dbReference>
<dbReference type="InterPro" id="IPR000271">
    <property type="entry name" value="Ribosomal_bL34"/>
</dbReference>
<dbReference type="InterPro" id="IPR020939">
    <property type="entry name" value="Ribosomal_bL34_CS"/>
</dbReference>
<dbReference type="NCBIfam" id="TIGR01030">
    <property type="entry name" value="rpmH_bact"/>
    <property type="match status" value="1"/>
</dbReference>
<dbReference type="PANTHER" id="PTHR14503:SF4">
    <property type="entry name" value="LARGE RIBOSOMAL SUBUNIT PROTEIN BL34M"/>
    <property type="match status" value="1"/>
</dbReference>
<dbReference type="PANTHER" id="PTHR14503">
    <property type="entry name" value="MITOCHONDRIAL RIBOSOMAL PROTEIN 34 FAMILY MEMBER"/>
    <property type="match status" value="1"/>
</dbReference>
<dbReference type="Pfam" id="PF00468">
    <property type="entry name" value="Ribosomal_L34"/>
    <property type="match status" value="1"/>
</dbReference>
<dbReference type="PROSITE" id="PS00784">
    <property type="entry name" value="RIBOSOMAL_L34"/>
    <property type="match status" value="1"/>
</dbReference>
<feature type="chain" id="PRO_0000187467" description="Large ribosomal subunit protein bL34">
    <location>
        <begin position="1"/>
        <end position="45"/>
    </location>
</feature>
<feature type="region of interest" description="Disordered" evidence="2">
    <location>
        <begin position="1"/>
        <end position="45"/>
    </location>
</feature>
<sequence>MVKRTYQPNKRKHSKVHGFRKRMSTKNGRKVLARRRRKGRKVLSA</sequence>
<gene>
    <name evidence="1" type="primary">rpmH</name>
    <name type="ordered locus">SERP0001</name>
</gene>
<name>RL34_STAEQ</name>
<comment type="similarity">
    <text evidence="1">Belongs to the bacterial ribosomal protein bL34 family.</text>
</comment>
<evidence type="ECO:0000255" key="1">
    <source>
        <dbReference type="HAMAP-Rule" id="MF_00391"/>
    </source>
</evidence>
<evidence type="ECO:0000256" key="2">
    <source>
        <dbReference type="SAM" id="MobiDB-lite"/>
    </source>
</evidence>
<evidence type="ECO:0000305" key="3"/>